<comment type="function">
    <text evidence="3">Catalyzes the third of the four reactions of the long-chain fatty acids elongation cycle. This endoplasmic reticulum-bound enzymatic process, allows the addition of two carbons to the chain of long- and very long-chain fatty acids/VLCFAs per cycle. This enzyme catalyzes the dehydration of the 3-hydroxyacyl-CoA intermediate into trans-2,3-enoyl-CoA, within each cycle of fatty acid elongation. Thereby, it participates in the production of VLCFAs of different chain lengths that are involved in multiple biological processes as precursors of membrane lipids and lipid mediators. May be an anti-phosphatase that prevents CDKA-1 dephosphorylation and activation. Involved in the hormonal control of cell division and differentiation. Required for proliferation control of meristematic and non-meristematic cells. Negative regulator of the cell cycle.</text>
</comment>
<comment type="catalytic activity">
    <reaction evidence="3">
        <text>a very-long-chain (3R)-3-hydroxyacyl-CoA = a very-long-chain (2E)-enoyl-CoA + H2O</text>
        <dbReference type="Rhea" id="RHEA:45812"/>
        <dbReference type="ChEBI" id="CHEBI:15377"/>
        <dbReference type="ChEBI" id="CHEBI:83728"/>
        <dbReference type="ChEBI" id="CHEBI:85440"/>
        <dbReference type="EC" id="4.2.1.134"/>
    </reaction>
</comment>
<comment type="pathway">
    <text evidence="3">Lipid metabolism; fatty acid biosynthesis.</text>
</comment>
<comment type="subcellular location">
    <subcellularLocation>
        <location evidence="1">Endoplasmic reticulum membrane</location>
        <topology evidence="1">Multi-pass membrane protein</topology>
    </subcellularLocation>
</comment>
<comment type="similarity">
    <text evidence="5">Belongs to the very long-chain fatty acids dehydratase HACD family.</text>
</comment>
<comment type="sequence caution" evidence="5">
    <conflict type="erroneous gene model prediction">
        <sequence resource="EMBL-CDS" id="EEE53880"/>
    </conflict>
</comment>
<evidence type="ECO:0000250" key="1"/>
<evidence type="ECO:0000250" key="2">
    <source>
        <dbReference type="UniProtKB" id="P40857"/>
    </source>
</evidence>
<evidence type="ECO:0000250" key="3">
    <source>
        <dbReference type="UniProtKB" id="Q8VZB2"/>
    </source>
</evidence>
<evidence type="ECO:0000255" key="4"/>
<evidence type="ECO:0000305" key="5"/>
<proteinExistence type="evidence at transcript level"/>
<keyword id="KW-0217">Developmental protein</keyword>
<keyword id="KW-0256">Endoplasmic reticulum</keyword>
<keyword id="KW-0275">Fatty acid biosynthesis</keyword>
<keyword id="KW-0276">Fatty acid metabolism</keyword>
<keyword id="KW-0444">Lipid biosynthesis</keyword>
<keyword id="KW-0443">Lipid metabolism</keyword>
<keyword id="KW-0456">Lyase</keyword>
<keyword id="KW-0472">Membrane</keyword>
<keyword id="KW-1185">Reference proteome</keyword>
<keyword id="KW-0812">Transmembrane</keyword>
<keyword id="KW-1133">Transmembrane helix</keyword>
<name>HACDB_ORYSJ</name>
<feature type="chain" id="PRO_0000372482" description="Very-long-chain (3R)-3-hydroxyacyl-CoA dehydratase PASTICCINO 2B">
    <location>
        <begin position="1"/>
        <end position="221"/>
    </location>
</feature>
<feature type="topological domain" description="Cytoplasmic" evidence="4">
    <location>
        <begin position="1"/>
        <end position="11"/>
    </location>
</feature>
<feature type="transmembrane region" description="Helical" evidence="4">
    <location>
        <begin position="12"/>
        <end position="32"/>
    </location>
</feature>
<feature type="topological domain" description="Lumenal" evidence="4">
    <location>
        <begin position="33"/>
        <end position="51"/>
    </location>
</feature>
<feature type="transmembrane region" description="Helical" evidence="4">
    <location>
        <begin position="52"/>
        <end position="70"/>
    </location>
</feature>
<feature type="topological domain" description="Cytoplasmic" evidence="4">
    <location>
        <begin position="71"/>
        <end position="76"/>
    </location>
</feature>
<feature type="transmembrane region" description="Helical" evidence="4">
    <location>
        <begin position="77"/>
        <end position="95"/>
    </location>
</feature>
<feature type="topological domain" description="Lumenal" evidence="4">
    <location>
        <begin position="96"/>
        <end position="100"/>
    </location>
</feature>
<feature type="transmembrane region" description="Helical" evidence="4">
    <location>
        <begin position="101"/>
        <end position="121"/>
    </location>
</feature>
<feature type="topological domain" description="Cytoplasmic" evidence="4">
    <location>
        <begin position="122"/>
        <end position="141"/>
    </location>
</feature>
<feature type="transmembrane region" description="Helical" evidence="4">
    <location>
        <begin position="142"/>
        <end position="165"/>
    </location>
</feature>
<feature type="topological domain" description="Lumenal" evidence="4">
    <location>
        <begin position="166"/>
        <end position="184"/>
    </location>
</feature>
<feature type="transmembrane region" description="Helical" evidence="4">
    <location>
        <begin position="185"/>
        <end position="209"/>
    </location>
</feature>
<feature type="topological domain" description="Cytoplasmic" evidence="4">
    <location>
        <begin position="210"/>
        <end position="221"/>
    </location>
</feature>
<feature type="active site" evidence="2">
    <location>
        <position position="147"/>
    </location>
</feature>
<feature type="active site" evidence="2">
    <location>
        <position position="154"/>
    </location>
</feature>
<feature type="sequence conflict" description="In Ref. 6; AK099465." evidence="5" ref="6">
    <original>A</original>
    <variation>T</variation>
    <location>
        <position position="31"/>
    </location>
</feature>
<dbReference type="EC" id="4.2.1.134" evidence="3"/>
<dbReference type="EMBL" id="AP002522">
    <property type="protein sequence ID" value="BAD61100.1"/>
    <property type="molecule type" value="Genomic_DNA"/>
</dbReference>
<dbReference type="EMBL" id="AP008207">
    <property type="protein sequence ID" value="BAF03946.1"/>
    <property type="molecule type" value="Genomic_DNA"/>
</dbReference>
<dbReference type="EMBL" id="AP014957">
    <property type="protein sequence ID" value="BAS70413.1"/>
    <property type="molecule type" value="Genomic_DNA"/>
</dbReference>
<dbReference type="EMBL" id="CM000138">
    <property type="protein sequence ID" value="EEE53880.1"/>
    <property type="status" value="ALT_SEQ"/>
    <property type="molecule type" value="Genomic_DNA"/>
</dbReference>
<dbReference type="EMBL" id="AK060935">
    <property type="protein sequence ID" value="BAG87629.1"/>
    <property type="molecule type" value="mRNA"/>
</dbReference>
<dbReference type="EMBL" id="AK099465">
    <property type="status" value="NOT_ANNOTATED_CDS"/>
    <property type="molecule type" value="mRNA"/>
</dbReference>
<dbReference type="FunCoup" id="Q5ZEJ0">
    <property type="interactions" value="1940"/>
</dbReference>
<dbReference type="STRING" id="39947.Q5ZEJ0"/>
<dbReference type="PaxDb" id="39947-Q5ZEJ0"/>
<dbReference type="EnsemblPlants" id="Os01t0150200-01">
    <property type="protein sequence ID" value="Os01t0150200-01"/>
    <property type="gene ID" value="Os01g0150200"/>
</dbReference>
<dbReference type="EnsemblPlants" id="Os01t0150200-02">
    <property type="protein sequence ID" value="Os01t0150200-02"/>
    <property type="gene ID" value="Os01g0150200"/>
</dbReference>
<dbReference type="Gramene" id="Os01t0150200-01">
    <property type="protein sequence ID" value="Os01t0150200-01"/>
    <property type="gene ID" value="Os01g0150200"/>
</dbReference>
<dbReference type="Gramene" id="Os01t0150200-02">
    <property type="protein sequence ID" value="Os01t0150200-02"/>
    <property type="gene ID" value="Os01g0150200"/>
</dbReference>
<dbReference type="KEGG" id="dosa:Os01g0150200"/>
<dbReference type="eggNOG" id="KOG3187">
    <property type="taxonomic scope" value="Eukaryota"/>
</dbReference>
<dbReference type="HOGENOM" id="CLU_034302_0_0_1"/>
<dbReference type="InParanoid" id="Q5ZEJ0"/>
<dbReference type="OMA" id="WSYILWQ"/>
<dbReference type="OrthoDB" id="46988at2759"/>
<dbReference type="UniPathway" id="UPA00094"/>
<dbReference type="Proteomes" id="UP000000763">
    <property type="component" value="Chromosome 1"/>
</dbReference>
<dbReference type="Proteomes" id="UP000007752">
    <property type="component" value="Chromosome 1"/>
</dbReference>
<dbReference type="Proteomes" id="UP000059680">
    <property type="component" value="Chromosome 1"/>
</dbReference>
<dbReference type="GO" id="GO:0005789">
    <property type="term" value="C:endoplasmic reticulum membrane"/>
    <property type="evidence" value="ECO:0000318"/>
    <property type="project" value="GO_Central"/>
</dbReference>
<dbReference type="GO" id="GO:0018812">
    <property type="term" value="F:3-hydroxyacyl-CoA dehydratase activity"/>
    <property type="evidence" value="ECO:0000318"/>
    <property type="project" value="GO_Central"/>
</dbReference>
<dbReference type="GO" id="GO:0102158">
    <property type="term" value="F:very-long-chain (3R)-3-hydroxyacyl-CoA dehydratase activity"/>
    <property type="evidence" value="ECO:0007669"/>
    <property type="project" value="UniProtKB-EC"/>
</dbReference>
<dbReference type="GO" id="GO:0030497">
    <property type="term" value="P:fatty acid elongation"/>
    <property type="evidence" value="ECO:0000318"/>
    <property type="project" value="GO_Central"/>
</dbReference>
<dbReference type="GO" id="GO:0030148">
    <property type="term" value="P:sphingolipid biosynthetic process"/>
    <property type="evidence" value="ECO:0000318"/>
    <property type="project" value="GO_Central"/>
</dbReference>
<dbReference type="GO" id="GO:0042761">
    <property type="term" value="P:very long-chain fatty acid biosynthetic process"/>
    <property type="evidence" value="ECO:0000318"/>
    <property type="project" value="GO_Central"/>
</dbReference>
<dbReference type="InterPro" id="IPR007482">
    <property type="entry name" value="Tyr_Pase-like_PTPLA"/>
</dbReference>
<dbReference type="PANTHER" id="PTHR11035">
    <property type="entry name" value="VERY-LONG-CHAIN (3R)-3-HYDROXYACYL-COA DEHYDRATASE"/>
    <property type="match status" value="1"/>
</dbReference>
<dbReference type="PANTHER" id="PTHR11035:SF3">
    <property type="entry name" value="VERY-LONG-CHAIN (3R)-3-HYDROXYACYL-COA DEHYDRATASE"/>
    <property type="match status" value="1"/>
</dbReference>
<dbReference type="Pfam" id="PF04387">
    <property type="entry name" value="PTPLA"/>
    <property type="match status" value="1"/>
</dbReference>
<gene>
    <name type="primary">PAS2B</name>
    <name type="ordered locus">Os01g0150200</name>
    <name type="ordered locus">LOC_Os01g05694</name>
    <name type="ORF">OsJ_000378</name>
    <name type="ORF">OsJ_00388</name>
    <name type="ORF">P0009G03.5</name>
</gene>
<reference key="1">
    <citation type="journal article" date="2002" name="Nature">
        <title>The genome sequence and structure of rice chromosome 1.</title>
        <authorList>
            <person name="Sasaki T."/>
            <person name="Matsumoto T."/>
            <person name="Yamamoto K."/>
            <person name="Sakata K."/>
            <person name="Baba T."/>
            <person name="Katayose Y."/>
            <person name="Wu J."/>
            <person name="Niimura Y."/>
            <person name="Cheng Z."/>
            <person name="Nagamura Y."/>
            <person name="Antonio B.A."/>
            <person name="Kanamori H."/>
            <person name="Hosokawa S."/>
            <person name="Masukawa M."/>
            <person name="Arikawa K."/>
            <person name="Chiden Y."/>
            <person name="Hayashi M."/>
            <person name="Okamoto M."/>
            <person name="Ando T."/>
            <person name="Aoki H."/>
            <person name="Arita K."/>
            <person name="Hamada M."/>
            <person name="Harada C."/>
            <person name="Hijishita S."/>
            <person name="Honda M."/>
            <person name="Ichikawa Y."/>
            <person name="Idonuma A."/>
            <person name="Iijima M."/>
            <person name="Ikeda M."/>
            <person name="Ikeno M."/>
            <person name="Ito S."/>
            <person name="Ito T."/>
            <person name="Ito Y."/>
            <person name="Ito Y."/>
            <person name="Iwabuchi A."/>
            <person name="Kamiya K."/>
            <person name="Karasawa W."/>
            <person name="Katagiri S."/>
            <person name="Kikuta A."/>
            <person name="Kobayashi N."/>
            <person name="Kono I."/>
            <person name="Machita K."/>
            <person name="Maehara T."/>
            <person name="Mizuno H."/>
            <person name="Mizubayashi T."/>
            <person name="Mukai Y."/>
            <person name="Nagasaki H."/>
            <person name="Nakashima M."/>
            <person name="Nakama Y."/>
            <person name="Nakamichi Y."/>
            <person name="Nakamura M."/>
            <person name="Namiki N."/>
            <person name="Negishi M."/>
            <person name="Ohta I."/>
            <person name="Ono N."/>
            <person name="Saji S."/>
            <person name="Sakai K."/>
            <person name="Shibata M."/>
            <person name="Shimokawa T."/>
            <person name="Shomura A."/>
            <person name="Song J."/>
            <person name="Takazaki Y."/>
            <person name="Terasawa K."/>
            <person name="Tsuji K."/>
            <person name="Waki K."/>
            <person name="Yamagata H."/>
            <person name="Yamane H."/>
            <person name="Yoshiki S."/>
            <person name="Yoshihara R."/>
            <person name="Yukawa K."/>
            <person name="Zhong H."/>
            <person name="Iwama H."/>
            <person name="Endo T."/>
            <person name="Ito H."/>
            <person name="Hahn J.H."/>
            <person name="Kim H.-I."/>
            <person name="Eun M.-Y."/>
            <person name="Yano M."/>
            <person name="Jiang J."/>
            <person name="Gojobori T."/>
        </authorList>
    </citation>
    <scope>NUCLEOTIDE SEQUENCE [LARGE SCALE GENOMIC DNA]</scope>
    <source>
        <strain>cv. Nipponbare</strain>
    </source>
</reference>
<reference key="2">
    <citation type="journal article" date="2005" name="Nature">
        <title>The map-based sequence of the rice genome.</title>
        <authorList>
            <consortium name="International rice genome sequencing project (IRGSP)"/>
        </authorList>
    </citation>
    <scope>NUCLEOTIDE SEQUENCE [LARGE SCALE GENOMIC DNA]</scope>
    <source>
        <strain>cv. Nipponbare</strain>
    </source>
</reference>
<reference key="3">
    <citation type="journal article" date="2008" name="Nucleic Acids Res.">
        <title>The rice annotation project database (RAP-DB): 2008 update.</title>
        <authorList>
            <consortium name="The rice annotation project (RAP)"/>
        </authorList>
    </citation>
    <scope>GENOME REANNOTATION</scope>
    <source>
        <strain>cv. Nipponbare</strain>
    </source>
</reference>
<reference key="4">
    <citation type="journal article" date="2013" name="Rice">
        <title>Improvement of the Oryza sativa Nipponbare reference genome using next generation sequence and optical map data.</title>
        <authorList>
            <person name="Kawahara Y."/>
            <person name="de la Bastide M."/>
            <person name="Hamilton J.P."/>
            <person name="Kanamori H."/>
            <person name="McCombie W.R."/>
            <person name="Ouyang S."/>
            <person name="Schwartz D.C."/>
            <person name="Tanaka T."/>
            <person name="Wu J."/>
            <person name="Zhou S."/>
            <person name="Childs K.L."/>
            <person name="Davidson R.M."/>
            <person name="Lin H."/>
            <person name="Quesada-Ocampo L."/>
            <person name="Vaillancourt B."/>
            <person name="Sakai H."/>
            <person name="Lee S.S."/>
            <person name="Kim J."/>
            <person name="Numa H."/>
            <person name="Itoh T."/>
            <person name="Buell C.R."/>
            <person name="Matsumoto T."/>
        </authorList>
    </citation>
    <scope>GENOME REANNOTATION</scope>
    <source>
        <strain>cv. Nipponbare</strain>
    </source>
</reference>
<reference key="5">
    <citation type="journal article" date="2005" name="PLoS Biol.">
        <title>The genomes of Oryza sativa: a history of duplications.</title>
        <authorList>
            <person name="Yu J."/>
            <person name="Wang J."/>
            <person name="Lin W."/>
            <person name="Li S."/>
            <person name="Li H."/>
            <person name="Zhou J."/>
            <person name="Ni P."/>
            <person name="Dong W."/>
            <person name="Hu S."/>
            <person name="Zeng C."/>
            <person name="Zhang J."/>
            <person name="Zhang Y."/>
            <person name="Li R."/>
            <person name="Xu Z."/>
            <person name="Li S."/>
            <person name="Li X."/>
            <person name="Zheng H."/>
            <person name="Cong L."/>
            <person name="Lin L."/>
            <person name="Yin J."/>
            <person name="Geng J."/>
            <person name="Li G."/>
            <person name="Shi J."/>
            <person name="Liu J."/>
            <person name="Lv H."/>
            <person name="Li J."/>
            <person name="Wang J."/>
            <person name="Deng Y."/>
            <person name="Ran L."/>
            <person name="Shi X."/>
            <person name="Wang X."/>
            <person name="Wu Q."/>
            <person name="Li C."/>
            <person name="Ren X."/>
            <person name="Wang J."/>
            <person name="Wang X."/>
            <person name="Li D."/>
            <person name="Liu D."/>
            <person name="Zhang X."/>
            <person name="Ji Z."/>
            <person name="Zhao W."/>
            <person name="Sun Y."/>
            <person name="Zhang Z."/>
            <person name="Bao J."/>
            <person name="Han Y."/>
            <person name="Dong L."/>
            <person name="Ji J."/>
            <person name="Chen P."/>
            <person name="Wu S."/>
            <person name="Liu J."/>
            <person name="Xiao Y."/>
            <person name="Bu D."/>
            <person name="Tan J."/>
            <person name="Yang L."/>
            <person name="Ye C."/>
            <person name="Zhang J."/>
            <person name="Xu J."/>
            <person name="Zhou Y."/>
            <person name="Yu Y."/>
            <person name="Zhang B."/>
            <person name="Zhuang S."/>
            <person name="Wei H."/>
            <person name="Liu B."/>
            <person name="Lei M."/>
            <person name="Yu H."/>
            <person name="Li Y."/>
            <person name="Xu H."/>
            <person name="Wei S."/>
            <person name="He X."/>
            <person name="Fang L."/>
            <person name="Zhang Z."/>
            <person name="Zhang Y."/>
            <person name="Huang X."/>
            <person name="Su Z."/>
            <person name="Tong W."/>
            <person name="Li J."/>
            <person name="Tong Z."/>
            <person name="Li S."/>
            <person name="Ye J."/>
            <person name="Wang L."/>
            <person name="Fang L."/>
            <person name="Lei T."/>
            <person name="Chen C.-S."/>
            <person name="Chen H.-C."/>
            <person name="Xu Z."/>
            <person name="Li H."/>
            <person name="Huang H."/>
            <person name="Zhang F."/>
            <person name="Xu H."/>
            <person name="Li N."/>
            <person name="Zhao C."/>
            <person name="Li S."/>
            <person name="Dong L."/>
            <person name="Huang Y."/>
            <person name="Li L."/>
            <person name="Xi Y."/>
            <person name="Qi Q."/>
            <person name="Li W."/>
            <person name="Zhang B."/>
            <person name="Hu W."/>
            <person name="Zhang Y."/>
            <person name="Tian X."/>
            <person name="Jiao Y."/>
            <person name="Liang X."/>
            <person name="Jin J."/>
            <person name="Gao L."/>
            <person name="Zheng W."/>
            <person name="Hao B."/>
            <person name="Liu S.-M."/>
            <person name="Wang W."/>
            <person name="Yuan L."/>
            <person name="Cao M."/>
            <person name="McDermott J."/>
            <person name="Samudrala R."/>
            <person name="Wang J."/>
            <person name="Wong G.K.-S."/>
            <person name="Yang H."/>
        </authorList>
    </citation>
    <scope>NUCLEOTIDE SEQUENCE [LARGE SCALE GENOMIC DNA]</scope>
    <source>
        <strain>cv. Nipponbare</strain>
    </source>
</reference>
<reference key="6">
    <citation type="journal article" date="2003" name="Science">
        <title>Collection, mapping, and annotation of over 28,000 cDNA clones from japonica rice.</title>
        <authorList>
            <consortium name="The rice full-length cDNA consortium"/>
        </authorList>
    </citation>
    <scope>NUCLEOTIDE SEQUENCE [LARGE SCALE MRNA]</scope>
    <source>
        <strain>cv. Nipponbare</strain>
    </source>
</reference>
<protein>
    <recommendedName>
        <fullName evidence="5">Very-long-chain (3R)-3-hydroxyacyl-CoA dehydratase PASTICCINO 2B</fullName>
        <ecNumber evidence="3">4.2.1.134</ecNumber>
    </recommendedName>
    <alternativeName>
        <fullName>3-hydroxyacyl-CoA dehydratase PASTICCINO 2B</fullName>
        <shortName>HACD</shortName>
        <shortName>PAS2B</shortName>
    </alternativeName>
    <alternativeName>
        <fullName>Protein tyrosine phosphatase-like protein</fullName>
    </alternativeName>
</protein>
<organism>
    <name type="scientific">Oryza sativa subsp. japonica</name>
    <name type="common">Rice</name>
    <dbReference type="NCBI Taxonomy" id="39947"/>
    <lineage>
        <taxon>Eukaryota</taxon>
        <taxon>Viridiplantae</taxon>
        <taxon>Streptophyta</taxon>
        <taxon>Embryophyta</taxon>
        <taxon>Tracheophyta</taxon>
        <taxon>Spermatophyta</taxon>
        <taxon>Magnoliopsida</taxon>
        <taxon>Liliopsida</taxon>
        <taxon>Poales</taxon>
        <taxon>Poaceae</taxon>
        <taxon>BOP clade</taxon>
        <taxon>Oryzoideae</taxon>
        <taxon>Oryzeae</taxon>
        <taxon>Oryzinae</taxon>
        <taxon>Oryza</taxon>
        <taxon>Oryza sativa</taxon>
    </lineage>
</organism>
<sequence length="221" mass="25017">MTGVGSAVRRLYLSVYNWAVFFGWAQVLYYAVTTLLESGHEAVYAAVERPLQFAQTAAFLEILHGLVGLVRSPVSATLPQIGSRLFLTWGILWSFPETHSHILVTSLVISWSITEIIRYSFFGMKETFGFAPSWLLWLRYSTFMVLYPTGISSEVGLIYIALPYMKATEKYCLRMPNKWNFSFDFSYASILSLAVYVPGSPHMFTYMLAQRKKALAKAKAA</sequence>
<accession>Q5ZEJ0</accession>
<accession>A0A0P0UY45</accession>
<accession>A2ZPA6</accession>
<accession>B9ESW4</accession>